<evidence type="ECO:0000255" key="1">
    <source>
        <dbReference type="HAMAP-Rule" id="MF_00443"/>
    </source>
</evidence>
<name>THIG_LEGPL</name>
<proteinExistence type="inferred from homology"/>
<feature type="chain" id="PRO_1000206137" description="Thiazole synthase">
    <location>
        <begin position="1"/>
        <end position="262"/>
    </location>
</feature>
<feature type="active site" description="Schiff-base intermediate with DXP" evidence="1">
    <location>
        <position position="96"/>
    </location>
</feature>
<feature type="binding site" evidence="1">
    <location>
        <position position="157"/>
    </location>
    <ligand>
        <name>1-deoxy-D-xylulose 5-phosphate</name>
        <dbReference type="ChEBI" id="CHEBI:57792"/>
    </ligand>
</feature>
<feature type="binding site" evidence="1">
    <location>
        <begin position="184"/>
        <end position="185"/>
    </location>
    <ligand>
        <name>1-deoxy-D-xylulose 5-phosphate</name>
        <dbReference type="ChEBI" id="CHEBI:57792"/>
    </ligand>
</feature>
<feature type="binding site" evidence="1">
    <location>
        <begin position="206"/>
        <end position="207"/>
    </location>
    <ligand>
        <name>1-deoxy-D-xylulose 5-phosphate</name>
        <dbReference type="ChEBI" id="CHEBI:57792"/>
    </ligand>
</feature>
<keyword id="KW-0963">Cytoplasm</keyword>
<keyword id="KW-0704">Schiff base</keyword>
<keyword id="KW-0784">Thiamine biosynthesis</keyword>
<keyword id="KW-0808">Transferase</keyword>
<accession>Q5WWJ5</accession>
<reference key="1">
    <citation type="journal article" date="2004" name="Nat. Genet.">
        <title>Evidence in the Legionella pneumophila genome for exploitation of host cell functions and high genome plasticity.</title>
        <authorList>
            <person name="Cazalet C."/>
            <person name="Rusniok C."/>
            <person name="Brueggemann H."/>
            <person name="Zidane N."/>
            <person name="Magnier A."/>
            <person name="Ma L."/>
            <person name="Tichit M."/>
            <person name="Jarraud S."/>
            <person name="Bouchier C."/>
            <person name="Vandenesch F."/>
            <person name="Kunst F."/>
            <person name="Etienne J."/>
            <person name="Glaser P."/>
            <person name="Buchrieser C."/>
        </authorList>
    </citation>
    <scope>NUCLEOTIDE SEQUENCE [LARGE SCALE GENOMIC DNA]</scope>
    <source>
        <strain>Lens</strain>
    </source>
</reference>
<gene>
    <name evidence="1" type="primary">thiG</name>
    <name type="ordered locus">lpl1458</name>
</gene>
<sequence>MWNLAGKKLSSRLLLGTACYPSLEHMQQAIHNSGTEVITISIKRQTSAGLDGESFWQAVKKLDCHLLPNTAGCRNAEAAINTAEIARELFNTHWIKLEVIGDDYNLQPEPFELIKAARILIDRGFEVFPYCTDDLVLCQKLVDAGCKILMPWGAPIGSGKGLINPYALETLRYRFPDITLIIDAGIGKPSHAVQVMELGFDGVLLNTAVALANHPALMATAFRHAVIAGHQAFTGGMMSERNVAHPSTPLIDTPFWHQVNNL</sequence>
<protein>
    <recommendedName>
        <fullName evidence="1">Thiazole synthase</fullName>
        <ecNumber evidence="1">2.8.1.10</ecNumber>
    </recommendedName>
</protein>
<dbReference type="EC" id="2.8.1.10" evidence="1"/>
<dbReference type="EMBL" id="CR628337">
    <property type="protein sequence ID" value="CAH15698.1"/>
    <property type="molecule type" value="Genomic_DNA"/>
</dbReference>
<dbReference type="RefSeq" id="WP_011215506.1">
    <property type="nucleotide sequence ID" value="NC_006369.1"/>
</dbReference>
<dbReference type="SMR" id="Q5WWJ5"/>
<dbReference type="KEGG" id="lpf:lpl1458"/>
<dbReference type="LegioList" id="lpl1458"/>
<dbReference type="HOGENOM" id="CLU_062233_1_0_6"/>
<dbReference type="UniPathway" id="UPA00060"/>
<dbReference type="Proteomes" id="UP000002517">
    <property type="component" value="Chromosome"/>
</dbReference>
<dbReference type="GO" id="GO:0005737">
    <property type="term" value="C:cytoplasm"/>
    <property type="evidence" value="ECO:0007669"/>
    <property type="project" value="UniProtKB-SubCell"/>
</dbReference>
<dbReference type="GO" id="GO:1990107">
    <property type="term" value="F:thiazole synthase activity"/>
    <property type="evidence" value="ECO:0007669"/>
    <property type="project" value="UniProtKB-EC"/>
</dbReference>
<dbReference type="GO" id="GO:0009229">
    <property type="term" value="P:thiamine diphosphate biosynthetic process"/>
    <property type="evidence" value="ECO:0007669"/>
    <property type="project" value="UniProtKB-UniRule"/>
</dbReference>
<dbReference type="CDD" id="cd04728">
    <property type="entry name" value="ThiG"/>
    <property type="match status" value="1"/>
</dbReference>
<dbReference type="Gene3D" id="3.20.20.70">
    <property type="entry name" value="Aldolase class I"/>
    <property type="match status" value="1"/>
</dbReference>
<dbReference type="HAMAP" id="MF_00443">
    <property type="entry name" value="ThiG"/>
    <property type="match status" value="1"/>
</dbReference>
<dbReference type="InterPro" id="IPR013785">
    <property type="entry name" value="Aldolase_TIM"/>
</dbReference>
<dbReference type="InterPro" id="IPR033983">
    <property type="entry name" value="Thiazole_synthase_ThiG"/>
</dbReference>
<dbReference type="InterPro" id="IPR008867">
    <property type="entry name" value="ThiG"/>
</dbReference>
<dbReference type="PANTHER" id="PTHR34266">
    <property type="entry name" value="THIAZOLE SYNTHASE"/>
    <property type="match status" value="1"/>
</dbReference>
<dbReference type="PANTHER" id="PTHR34266:SF2">
    <property type="entry name" value="THIAZOLE SYNTHASE"/>
    <property type="match status" value="1"/>
</dbReference>
<dbReference type="Pfam" id="PF05690">
    <property type="entry name" value="ThiG"/>
    <property type="match status" value="1"/>
</dbReference>
<dbReference type="SUPFAM" id="SSF110399">
    <property type="entry name" value="ThiG-like"/>
    <property type="match status" value="1"/>
</dbReference>
<organism>
    <name type="scientific">Legionella pneumophila (strain Lens)</name>
    <dbReference type="NCBI Taxonomy" id="297245"/>
    <lineage>
        <taxon>Bacteria</taxon>
        <taxon>Pseudomonadati</taxon>
        <taxon>Pseudomonadota</taxon>
        <taxon>Gammaproteobacteria</taxon>
        <taxon>Legionellales</taxon>
        <taxon>Legionellaceae</taxon>
        <taxon>Legionella</taxon>
    </lineage>
</organism>
<comment type="function">
    <text evidence="1">Catalyzes the rearrangement of 1-deoxy-D-xylulose 5-phosphate (DXP) to produce the thiazole phosphate moiety of thiamine. Sulfur is provided by the thiocarboxylate moiety of the carrier protein ThiS. In vitro, sulfur can be provided by H(2)S.</text>
</comment>
<comment type="catalytic activity">
    <reaction evidence="1">
        <text>[ThiS sulfur-carrier protein]-C-terminal-Gly-aminoethanethioate + 2-iminoacetate + 1-deoxy-D-xylulose 5-phosphate = [ThiS sulfur-carrier protein]-C-terminal Gly-Gly + 2-[(2R,5Z)-2-carboxy-4-methylthiazol-5(2H)-ylidene]ethyl phosphate + 2 H2O + H(+)</text>
        <dbReference type="Rhea" id="RHEA:26297"/>
        <dbReference type="Rhea" id="RHEA-COMP:12909"/>
        <dbReference type="Rhea" id="RHEA-COMP:19908"/>
        <dbReference type="ChEBI" id="CHEBI:15377"/>
        <dbReference type="ChEBI" id="CHEBI:15378"/>
        <dbReference type="ChEBI" id="CHEBI:57792"/>
        <dbReference type="ChEBI" id="CHEBI:62899"/>
        <dbReference type="ChEBI" id="CHEBI:77846"/>
        <dbReference type="ChEBI" id="CHEBI:90778"/>
        <dbReference type="ChEBI" id="CHEBI:232372"/>
        <dbReference type="EC" id="2.8.1.10"/>
    </reaction>
</comment>
<comment type="pathway">
    <text evidence="1">Cofactor biosynthesis; thiamine diphosphate biosynthesis.</text>
</comment>
<comment type="subunit">
    <text evidence="1">Homotetramer. Forms heterodimers with either ThiH or ThiS.</text>
</comment>
<comment type="subcellular location">
    <subcellularLocation>
        <location evidence="1">Cytoplasm</location>
    </subcellularLocation>
</comment>
<comment type="similarity">
    <text evidence="1">Belongs to the ThiG family.</text>
</comment>